<organism>
    <name type="scientific">Mycobacterium bovis (strain ATCC BAA-935 / AF2122/97)</name>
    <dbReference type="NCBI Taxonomy" id="233413"/>
    <lineage>
        <taxon>Bacteria</taxon>
        <taxon>Bacillati</taxon>
        <taxon>Actinomycetota</taxon>
        <taxon>Actinomycetes</taxon>
        <taxon>Mycobacteriales</taxon>
        <taxon>Mycobacteriaceae</taxon>
        <taxon>Mycobacterium</taxon>
        <taxon>Mycobacterium tuberculosis complex</taxon>
    </lineage>
</organism>
<comment type="function">
    <text evidence="1">Involved in the reduction of the double bond between C-4 and C-5 during phthiocerol dimycocerosates (DIM A) and glycosylated phenolphthiocerol dimycocerosates (PGL) biosynthesis.</text>
</comment>
<comment type="similarity">
    <text evidence="2">Belongs to the saccharopine dehydrogenase family. Enoyl reductase subfamily.</text>
</comment>
<dbReference type="EC" id="1.3.1.-"/>
<dbReference type="EMBL" id="LT708304">
    <property type="protein sequence ID" value="SIU01599.1"/>
    <property type="molecule type" value="Genomic_DNA"/>
</dbReference>
<dbReference type="RefSeq" id="NP_856622.1">
    <property type="nucleotide sequence ID" value="NC_002945.3"/>
</dbReference>
<dbReference type="RefSeq" id="WP_003414903.1">
    <property type="nucleotide sequence ID" value="NC_002945.4"/>
</dbReference>
<dbReference type="KEGG" id="mbo:BQ2027_MB2977"/>
<dbReference type="PATRIC" id="fig|233413.5.peg.3271"/>
<dbReference type="BioCyc" id="MetaCyc:MONOMER-19631"/>
<dbReference type="Proteomes" id="UP000001419">
    <property type="component" value="Chromosome"/>
</dbReference>
<dbReference type="GO" id="GO:0005886">
    <property type="term" value="C:plasma membrane"/>
    <property type="evidence" value="ECO:0007669"/>
    <property type="project" value="TreeGrafter"/>
</dbReference>
<dbReference type="GO" id="GO:0016491">
    <property type="term" value="F:oxidoreductase activity"/>
    <property type="evidence" value="ECO:0007669"/>
    <property type="project" value="UniProtKB-KW"/>
</dbReference>
<dbReference type="GO" id="GO:0009247">
    <property type="term" value="P:glycolipid biosynthetic process"/>
    <property type="evidence" value="ECO:0007669"/>
    <property type="project" value="TreeGrafter"/>
</dbReference>
<dbReference type="FunFam" id="3.40.50.720:FF:000413">
    <property type="entry name" value="Trans-acting enoyl reductase"/>
    <property type="match status" value="1"/>
</dbReference>
<dbReference type="Gene3D" id="3.40.50.720">
    <property type="entry name" value="NAD(P)-binding Rossmann-like Domain"/>
    <property type="match status" value="1"/>
</dbReference>
<dbReference type="InterPro" id="IPR036291">
    <property type="entry name" value="NAD(P)-bd_dom_sf"/>
</dbReference>
<dbReference type="InterPro" id="IPR051276">
    <property type="entry name" value="Saccharopine_DH-like_oxidrdct"/>
</dbReference>
<dbReference type="InterPro" id="IPR005097">
    <property type="entry name" value="Sacchrp_dh_NADP-bd"/>
</dbReference>
<dbReference type="PANTHER" id="PTHR12286">
    <property type="entry name" value="SACCHAROPINE DEHYDROGENASE-LIKE OXIDOREDUCTASE"/>
    <property type="match status" value="1"/>
</dbReference>
<dbReference type="PANTHER" id="PTHR12286:SF5">
    <property type="entry name" value="SACCHAROPINE DEHYDROGENASE-LIKE OXIDOREDUCTASE"/>
    <property type="match status" value="1"/>
</dbReference>
<dbReference type="Pfam" id="PF03435">
    <property type="entry name" value="Sacchrp_dh_NADP"/>
    <property type="match status" value="1"/>
</dbReference>
<dbReference type="SUPFAM" id="SSF51735">
    <property type="entry name" value="NAD(P)-binding Rossmann-fold domains"/>
    <property type="match status" value="1"/>
</dbReference>
<sequence length="418" mass="45104">MSPAEREFDIVLYGATGFSGKLTAEHLAHSGSTARIALAGRSSERLRGVRMMLGPNAADWPLILADASQPLTLEAMAARAQVVLTTVGPYTRYGLPLVAACAKAGTDYADLTGELMFCRNSIDLYHKQAADTGARIILACGFDSIPSDLNVYQLYRRSVEDGTGELCDTDLVLRSFSQRWVSGGSVATYSEAMRTASSDPEARRLVTDPYTLTTDRGAEPELGAQPDFLRRPGRDLAPELAGFWTGGFVQAPFNTRIVRRSNALQEWAYGRRFRYSETMSLGKSMAAPILAAAVTGTVAGTIGLGNKYFDRLPRRLVERVTPKPGTGPSRKTQERGHYTFETYTTTTTGARYRATFAHNVDAYKSTAVLLAQSGLALALDRDRLAELRGVLTPAAAMGDALLARLPGAGVVMGTTRLS</sequence>
<feature type="chain" id="PRO_0000304691" description="Trans-acting enoyl reductase">
    <location>
        <begin position="1"/>
        <end position="418"/>
    </location>
</feature>
<proteinExistence type="inferred from homology"/>
<accession>Q7TXK2</accession>
<accession>A0A1R3Y2N7</accession>
<accession>X2BM75</accession>
<protein>
    <recommendedName>
        <fullName>Trans-acting enoyl reductase</fullName>
        <ecNumber>1.3.1.-</ecNumber>
    </recommendedName>
</protein>
<gene>
    <name type="ordered locus">BQ2027_MB2977</name>
</gene>
<evidence type="ECO:0000250" key="1"/>
<evidence type="ECO:0000305" key="2"/>
<keyword id="KW-0444">Lipid biosynthesis</keyword>
<keyword id="KW-0443">Lipid metabolism</keyword>
<keyword id="KW-0560">Oxidoreductase</keyword>
<keyword id="KW-1185">Reference proteome</keyword>
<name>TAER_MYCBO</name>
<reference key="1">
    <citation type="journal article" date="2003" name="Proc. Natl. Acad. Sci. U.S.A.">
        <title>The complete genome sequence of Mycobacterium bovis.</title>
        <authorList>
            <person name="Garnier T."/>
            <person name="Eiglmeier K."/>
            <person name="Camus J.-C."/>
            <person name="Medina N."/>
            <person name="Mansoor H."/>
            <person name="Pryor M."/>
            <person name="Duthoy S."/>
            <person name="Grondin S."/>
            <person name="Lacroix C."/>
            <person name="Monsempe C."/>
            <person name="Simon S."/>
            <person name="Harris B."/>
            <person name="Atkin R."/>
            <person name="Doggett J."/>
            <person name="Mayes R."/>
            <person name="Keating L."/>
            <person name="Wheeler P.R."/>
            <person name="Parkhill J."/>
            <person name="Barrell B.G."/>
            <person name="Cole S.T."/>
            <person name="Gordon S.V."/>
            <person name="Hewinson R.G."/>
        </authorList>
    </citation>
    <scope>NUCLEOTIDE SEQUENCE [LARGE SCALE GENOMIC DNA]</scope>
    <source>
        <strain>ATCC BAA-935 / AF2122/97</strain>
    </source>
</reference>
<reference key="2">
    <citation type="journal article" date="2017" name="Genome Announc.">
        <title>Updated reference genome sequence and annotation of Mycobacterium bovis AF2122/97.</title>
        <authorList>
            <person name="Malone K.M."/>
            <person name="Farrell D."/>
            <person name="Stuber T.P."/>
            <person name="Schubert O.T."/>
            <person name="Aebersold R."/>
            <person name="Robbe-Austerman S."/>
            <person name="Gordon S.V."/>
        </authorList>
    </citation>
    <scope>NUCLEOTIDE SEQUENCE [LARGE SCALE GENOMIC DNA]</scope>
    <scope>GENOME REANNOTATION</scope>
    <source>
        <strain>ATCC BAA-935 / AF2122/97</strain>
    </source>
</reference>